<keyword id="KW-0963">Cytoplasm</keyword>
<keyword id="KW-0479">Metal-binding</keyword>
<keyword id="KW-0484">Methanogenesis</keyword>
<keyword id="KW-0488">Methylation</keyword>
<keyword id="KW-0533">Nickel</keyword>
<keyword id="KW-0808">Transferase</keyword>
<dbReference type="EC" id="2.8.4.1" evidence="1"/>
<dbReference type="EMBL" id="M16893">
    <property type="protein sequence ID" value="AAA72598.1"/>
    <property type="molecule type" value="Genomic_DNA"/>
</dbReference>
<dbReference type="PIR" id="E27793">
    <property type="entry name" value="E27793"/>
</dbReference>
<dbReference type="SMR" id="P07961"/>
<dbReference type="UniPathway" id="UPA00646">
    <property type="reaction ID" value="UER00699"/>
</dbReference>
<dbReference type="GO" id="GO:0005737">
    <property type="term" value="C:cytoplasm"/>
    <property type="evidence" value="ECO:0007669"/>
    <property type="project" value="UniProtKB-SubCell"/>
</dbReference>
<dbReference type="GO" id="GO:0050524">
    <property type="term" value="F:coenzyme-B sulfoethylthiotransferase activity"/>
    <property type="evidence" value="ECO:0007669"/>
    <property type="project" value="UniProtKB-EC"/>
</dbReference>
<dbReference type="GO" id="GO:0046872">
    <property type="term" value="F:metal ion binding"/>
    <property type="evidence" value="ECO:0007669"/>
    <property type="project" value="UniProtKB-KW"/>
</dbReference>
<dbReference type="GO" id="GO:0015948">
    <property type="term" value="P:methanogenesis"/>
    <property type="evidence" value="ECO:0007669"/>
    <property type="project" value="UniProtKB-KW"/>
</dbReference>
<dbReference type="Gene3D" id="3.30.70.470">
    <property type="match status" value="1"/>
</dbReference>
<dbReference type="Gene3D" id="1.20.840.10">
    <property type="entry name" value="Methyl-coenzyme M reductase, alpha/beta subunit, C-terminal"/>
    <property type="match status" value="1"/>
</dbReference>
<dbReference type="Gene3D" id="3.90.390.10">
    <property type="entry name" value="Methyl-coenzyme M Reductase, Chain A, domain 1"/>
    <property type="match status" value="1"/>
</dbReference>
<dbReference type="InterPro" id="IPR016212">
    <property type="entry name" value="Me_CoM_Rdtase_asu"/>
</dbReference>
<dbReference type="InterPro" id="IPR008924">
    <property type="entry name" value="Me_CoM_Rdtase_asu/bsu_C"/>
</dbReference>
<dbReference type="InterPro" id="IPR009047">
    <property type="entry name" value="Me_CoM_Rdtase_asu_C"/>
</dbReference>
<dbReference type="InterPro" id="IPR003183">
    <property type="entry name" value="Me_CoM_Rdtase_asu_N"/>
</dbReference>
<dbReference type="InterPro" id="IPR015811">
    <property type="entry name" value="Me_CoM_Rdtase_asu_N_sub1"/>
</dbReference>
<dbReference type="InterPro" id="IPR015823">
    <property type="entry name" value="Me_CoM_Rdtase_asu_N_sub2"/>
</dbReference>
<dbReference type="InterPro" id="IPR009024">
    <property type="entry name" value="Me_CoM_Rdtase_Fd-like_fold"/>
</dbReference>
<dbReference type="NCBIfam" id="TIGR03256">
    <property type="entry name" value="met_CoM_red_alp"/>
    <property type="match status" value="1"/>
</dbReference>
<dbReference type="Pfam" id="PF02249">
    <property type="entry name" value="MCR_alpha"/>
    <property type="match status" value="1"/>
</dbReference>
<dbReference type="Pfam" id="PF02745">
    <property type="entry name" value="MCR_alpha_N"/>
    <property type="match status" value="1"/>
</dbReference>
<dbReference type="PIRSF" id="PIRSF000262">
    <property type="entry name" value="MCR_alpha"/>
    <property type="match status" value="1"/>
</dbReference>
<dbReference type="SUPFAM" id="SSF48081">
    <property type="entry name" value="Methyl-coenzyme M reductase alpha and beta chain C-terminal domain"/>
    <property type="match status" value="1"/>
</dbReference>
<dbReference type="SUPFAM" id="SSF55088">
    <property type="entry name" value="Methyl-coenzyme M reductase subunits"/>
    <property type="match status" value="1"/>
</dbReference>
<evidence type="ECO:0000250" key="1">
    <source>
        <dbReference type="UniProtKB" id="P11558"/>
    </source>
</evidence>
<evidence type="ECO:0000305" key="2"/>
<sequence>MEAEKRLFLKALKEKFEEDPKEKYTKFYTYGGWEQSVRKREFVAANEKVLAEKRQGVPLYNPDIGVPLGQRKLMPYKLSGTDSYCEGDDLHFMNNAAIQQLWDDIRRTVVVGMDTAHSVLEKRLGVEVTPETINEYMHTINHALSGGAVVQEHMVEVHPSLAWDSYARIFTGDDELAAELDSRFLIDINKLFPAEQAEALKKAIGKKTYQVSRVPSLVGRVCDGGTISRWSAMQIGMSFITAYKLCAGEAATADFSYASKHADVIQMGNALPGRRARGPNEPGGIQFGILSDVVQTTRVSDDPVEQSLEVVAAGAALYDQIWLGAYMSGGVGFTQYATAAYTDDILDDFSYYALDYVEKKYGRMGTKATMDVVEDIASEVTLYSLEQYDEYPALLEDHFGGSQRAAVAAAASGIGVCMATGNSNAGVNGWYLSQILHKEYHSRLGFYGYDLQDQCGASNSLAIRNDESAPLELRGPNYPNYAMNVGHQGEYAGIAQAAHSARGDAFAMSALIKVAFADPMLVFDFSKPRKEFARGALREFDAAGERDVILPAK</sequence>
<proteinExistence type="inferred from homology"/>
<accession>P07961</accession>
<gene>
    <name type="primary">mcrA</name>
</gene>
<reference key="1">
    <citation type="journal article" date="1987" name="Proc. Natl. Acad. Sci. U.S.A.">
        <title>Structure and expression of the genes, mcrBDCGA, which encode the subunits of component C of methyl coenzyme M reductase in Methanococcus vannielii.</title>
        <authorList>
            <person name="Cram D.S."/>
            <person name="Sherf B.A."/>
            <person name="Libby R.T."/>
            <person name="Mattaliano R.J."/>
            <person name="Ramachandran K.L."/>
            <person name="Reeve J.N."/>
        </authorList>
    </citation>
    <scope>NUCLEOTIDE SEQUENCE [GENOMIC DNA]</scope>
</reference>
<protein>
    <recommendedName>
        <fullName>Methyl-coenzyme M reductase subunit alpha</fullName>
        <ecNumber evidence="1">2.8.4.1</ecNumber>
    </recommendedName>
    <alternativeName>
        <fullName>Coenzyme-B sulfoethylthiotransferase alpha</fullName>
    </alternativeName>
</protein>
<organism>
    <name type="scientific">Methanococcus vannielii</name>
    <dbReference type="NCBI Taxonomy" id="2187"/>
    <lineage>
        <taxon>Archaea</taxon>
        <taxon>Methanobacteriati</taxon>
        <taxon>Methanobacteriota</taxon>
        <taxon>Methanomada group</taxon>
        <taxon>Methanococci</taxon>
        <taxon>Methanococcales</taxon>
        <taxon>Methanococcaceae</taxon>
        <taxon>Methanococcus</taxon>
    </lineage>
</organism>
<comment type="function">
    <text evidence="1">Component of the methyl-coenzyme M reductase (MCR) I that catalyzes the reductive cleavage of methyl-coenzyme M (CoM-S-CH3 or 2-(methylthio)ethanesulfonate) using coenzyme B (CoB or 7-mercaptoheptanoylthreonine phosphate) as reductant which results in the production of methane and the mixed heterodisulfide of CoB and CoM (CoM-S-S-CoB). This is the final step in methanogenesis.</text>
</comment>
<comment type="catalytic activity">
    <reaction evidence="1">
        <text>coenzyme B + methyl-coenzyme M = methane + coenzyme M-coenzyme B heterodisulfide</text>
        <dbReference type="Rhea" id="RHEA:12532"/>
        <dbReference type="ChEBI" id="CHEBI:16183"/>
        <dbReference type="ChEBI" id="CHEBI:58286"/>
        <dbReference type="ChEBI" id="CHEBI:58411"/>
        <dbReference type="ChEBI" id="CHEBI:58596"/>
        <dbReference type="EC" id="2.8.4.1"/>
    </reaction>
    <physiologicalReaction direction="left-to-right" evidence="1">
        <dbReference type="Rhea" id="RHEA:12533"/>
    </physiologicalReaction>
</comment>
<comment type="cofactor">
    <cofactor evidence="1">
        <name>coenzyme F430</name>
        <dbReference type="ChEBI" id="CHEBI:60540"/>
    </cofactor>
    <text evidence="1">Binds 2 coenzyme F430 non-covalently per MCR complex. Coenzyme F430 is a yellow nickel porphinoid. Methyl-coenzyme-M reductase is activated when the enzyme-bound coenzyme F430 is reduced to the Ni(I) oxidation state.</text>
</comment>
<comment type="pathway">
    <text evidence="1">One-carbon metabolism; methyl-coenzyme M reduction; methane from methyl-coenzyme M: step 1/1.</text>
</comment>
<comment type="subunit">
    <text evidence="1">MCR is a hexamer of two alpha, two beta, and two gamma chains, forming a dimer of heterotrimers.</text>
</comment>
<comment type="subcellular location">
    <subcellularLocation>
        <location evidence="1">Cytoplasm</location>
    </subcellularLocation>
</comment>
<comment type="similarity">
    <text evidence="2">Belongs to the methyl-coenzyme M reductase alpha subunit family.</text>
</comment>
<feature type="chain" id="PRO_0000147460" description="Methyl-coenzyme M reductase subunit alpha">
    <location>
        <begin position="1"/>
        <end position="553"/>
    </location>
</feature>
<feature type="binding site" description="axial binding residue" evidence="1">
    <location>
        <position position="151"/>
    </location>
    <ligand>
        <name>coenzyme F430</name>
        <dbReference type="ChEBI" id="CHEBI:60540"/>
    </ligand>
    <ligandPart>
        <name>Ni</name>
        <dbReference type="ChEBI" id="CHEBI:28112"/>
    </ligandPart>
</feature>
<feature type="binding site" description="in chain A" evidence="1">
    <location>
        <position position="229"/>
    </location>
    <ligand>
        <name>coenzyme B</name>
        <dbReference type="ChEBI" id="CHEBI:58596"/>
        <note>ligand shared between two alpha subunits</note>
    </ligand>
</feature>
<feature type="binding site" description="in chain A" evidence="1">
    <location>
        <begin position="260"/>
        <end position="261"/>
    </location>
    <ligand>
        <name>coenzyme B</name>
        <dbReference type="ChEBI" id="CHEBI:58596"/>
        <note>ligand shared between two alpha subunits</note>
    </ligand>
</feature>
<feature type="binding site" description="in chain B" evidence="1">
    <location>
        <position position="274"/>
    </location>
    <ligand>
        <name>coenzyme B</name>
        <dbReference type="ChEBI" id="CHEBI:58596"/>
        <note>ligand shared between two alpha subunits</note>
    </ligand>
</feature>
<feature type="binding site" evidence="1">
    <location>
        <position position="336"/>
    </location>
    <ligand>
        <name>coenzyme M</name>
        <dbReference type="ChEBI" id="CHEBI:58319"/>
    </ligand>
</feature>
<feature type="binding site" evidence="1">
    <location>
        <position position="447"/>
    </location>
    <ligand>
        <name>coenzyme M</name>
        <dbReference type="ChEBI" id="CHEBI:58319"/>
    </ligand>
</feature>
<name>MCRA_METVA</name>